<reference key="1">
    <citation type="journal article" date="2002" name="Proc. Natl. Acad. Sci. U.S.A.">
        <title>Semidwarf (sd-1), 'green revolution' rice, contains a defective gibberellin 20-oxidase gene.</title>
        <authorList>
            <person name="Spielmeyer W."/>
            <person name="Ellis M.H."/>
            <person name="Chandler P.M."/>
        </authorList>
    </citation>
    <scope>NUCLEOTIDE SEQUENCE [MRNA]</scope>
    <scope>POLYMORPHISM</scope>
    <scope>VARIANTS SD-1 100-GLU--GLY-102 DELINS ALA-ARG-ARG AND 103-VAL--SER-389 DEL</scope>
    <source>
        <strain>cv. Doongara</strain>
        <strain>cv. Kyeema</strain>
    </source>
</reference>
<reference key="2">
    <citation type="journal article" date="2002" name="DNA Res.">
        <title>Positional cloning of rice semidwarfing gene, sd-1: rice 'green revolution gene' encodes a mutant enzyme involved in gibberellin synthesis.</title>
        <authorList>
            <person name="Monna L."/>
            <person name="Kitazawa N."/>
            <person name="Yoshino R."/>
            <person name="Suzuki J."/>
            <person name="Masuda H."/>
            <person name="Maehara Y."/>
            <person name="Tanji M."/>
            <person name="Sato M."/>
            <person name="Nasu S."/>
            <person name="Minobe Y."/>
        </authorList>
    </citation>
    <scope>NUCLEOTIDE SEQUENCE [MRNA]</scope>
    <scope>VARIANTS SD-1 100-GLU--GLY-102 DELINS ALA-ARG-ARG AND 103-VAL--SER-389 DEL</scope>
    <source>
        <strain>cv. Habataki</strain>
        <strain>cv. IR24</strain>
        <strain>cv. Milyang 23</strain>
    </source>
</reference>
<reference key="3">
    <citation type="submission" date="2002-01" db="EMBL/GenBank/DDBJ databases">
        <title>Map-based cloning of semidwarf gene, Sd-1, in rice.</title>
        <authorList>
            <person name="Yoon U.H."/>
            <person name="Eun M.Y."/>
            <person name="Kim Y.H."/>
            <person name="Lee J.S."/>
            <person name="Yun D.W."/>
            <person name="Kim H.I."/>
            <person name="Hahn J.H."/>
        </authorList>
    </citation>
    <scope>NUCLEOTIDE SEQUENCE [GENOMIC DNA] (SD-1)</scope>
    <source>
        <strain>cv. Milyang 23</strain>
    </source>
</reference>
<reference key="4">
    <citation type="submission" date="2002-05" db="EMBL/GenBank/DDBJ databases">
        <title>The rice plant height quantitative trait locus ph1.1 maps within the gibberellin 20 oxidase locus on chromosome 1.</title>
        <authorList>
            <person name="Septiningsih E.M."/>
            <person name="Thomson M.J."/>
            <person name="Trijatmiko K.R."/>
            <person name="Moeljopawiro S."/>
            <person name="McCouch S.R."/>
        </authorList>
    </citation>
    <scope>NUCLEOTIDE SEQUENCE [GENOMIC DNA]</scope>
    <source>
        <strain>cv. IR64</strain>
    </source>
</reference>
<reference key="5">
    <citation type="journal article" date="2002" name="Nature">
        <title>A mutant gibberellin-synthesis gene in rice.</title>
        <authorList>
            <person name="Sasaki A."/>
            <person name="Ashikari M."/>
            <person name="Ueguchi-Tanaka M."/>
            <person name="Itoh H."/>
            <person name="Nishimura A."/>
            <person name="Swapan D."/>
            <person name="Ishiyama K."/>
            <person name="Saito T."/>
            <person name="Kobayashi M."/>
            <person name="Khush G.S."/>
            <person name="Kitano H."/>
            <person name="Matsuoka M."/>
        </authorList>
    </citation>
    <scope>FUNCTION</scope>
</reference>
<sequence>MVAEHPTPPQPHQPPPMDSTAGSGIAAPAAAAVCDLRMEPKIPEPFVWPNGDARPASAAELDMPVVDVGVLRDGDAEGLRRAAAQVAAACATHGFFQVSEHGVDAALARAALDGASDFFRLPLAEKRRARRVPGTVSGYTSAHADRFASKLPWKETLSFGFHDRAAAPVVADYFSSTLGPDFAPMGRVYQKYCEEMKELSLTIMELLELSLGVERGYYREFFADSSSIMRCNYYPPCPEPERTLGTGPHCDPTALTILLQDDVGGLEVLVDGEWRPVSPVPGAMVINIGDTFMALSNGRYKSCLHRAVVNQRRERRSLAFFLCPREDRVVRPPPSAATPQHYPDFTWADLMRFTQRHYRADTRTLDAFTRWLAPPAADAAATAQVEAAS</sequence>
<feature type="chain" id="PRO_0000306090" description="Gibberellin 20 oxidase 2">
    <location>
        <begin position="1"/>
        <end position="389"/>
    </location>
</feature>
<feature type="domain" description="Fe2OG dioxygenase" evidence="3">
    <location>
        <begin position="224"/>
        <end position="324"/>
    </location>
</feature>
<feature type="region of interest" description="Disordered" evidence="4">
    <location>
        <begin position="1"/>
        <end position="23"/>
    </location>
</feature>
<feature type="compositionally biased region" description="Pro residues" evidence="4">
    <location>
        <begin position="1"/>
        <end position="17"/>
    </location>
</feature>
<feature type="active site" evidence="2">
    <location>
        <position position="315"/>
    </location>
</feature>
<feature type="binding site" evidence="3">
    <location>
        <position position="249"/>
    </location>
    <ligand>
        <name>Fe cation</name>
        <dbReference type="ChEBI" id="CHEBI:24875"/>
    </ligand>
</feature>
<feature type="binding site" evidence="3">
    <location>
        <position position="251"/>
    </location>
    <ligand>
        <name>Fe cation</name>
        <dbReference type="ChEBI" id="CHEBI:24875"/>
    </ligand>
</feature>
<feature type="binding site" evidence="3">
    <location>
        <position position="305"/>
    </location>
    <ligand>
        <name>Fe cation</name>
        <dbReference type="ChEBI" id="CHEBI:24875"/>
    </ligand>
</feature>
<feature type="sequence variant" description="In strain: cv. Doongara, cv. Habataki, cv. IR24 and cv. Milyang 23; allele sd-1; semidwarfing." evidence="5 7">
    <original>EHG</original>
    <variation>ARR</variation>
    <location>
        <begin position="100"/>
        <end position="102"/>
    </location>
</feature>
<feature type="sequence variant" description="In strain: cv. Doongara, cv. Habataki, cv. IR24 and cv. Milyang 23; allele sd-1; semidwarfing." evidence="5 7">
    <location>
        <begin position="103"/>
        <end position="389"/>
    </location>
</feature>
<name>GAOX2_ORYSI</name>
<dbReference type="EC" id="1.14.11.-" evidence="1"/>
<dbReference type="EMBL" id="AY114310">
    <property type="protein sequence ID" value="AAM56041.1"/>
    <property type="molecule type" value="mRNA"/>
</dbReference>
<dbReference type="EMBL" id="AF465256">
    <property type="protein sequence ID" value="AAL87950.1"/>
    <property type="molecule type" value="Genomic_DNA"/>
</dbReference>
<dbReference type="EMBL" id="AY115558">
    <property type="protein sequence ID" value="AAN73383.1"/>
    <property type="molecule type" value="Genomic_DNA"/>
</dbReference>
<dbReference type="SMR" id="P0C5H5"/>
<dbReference type="GO" id="GO:0045544">
    <property type="term" value="F:gibberellin 20-oxidase activity"/>
    <property type="evidence" value="ECO:0007669"/>
    <property type="project" value="RHEA"/>
</dbReference>
<dbReference type="GO" id="GO:0046872">
    <property type="term" value="F:metal ion binding"/>
    <property type="evidence" value="ECO:0007669"/>
    <property type="project" value="UniProtKB-KW"/>
</dbReference>
<dbReference type="FunFam" id="2.60.120.330:FF:000003">
    <property type="entry name" value="Gibberellin 20 oxidase 2"/>
    <property type="match status" value="1"/>
</dbReference>
<dbReference type="Gene3D" id="2.60.120.330">
    <property type="entry name" value="B-lactam Antibiotic, Isopenicillin N Synthase, Chain"/>
    <property type="match status" value="1"/>
</dbReference>
<dbReference type="InterPro" id="IPR026992">
    <property type="entry name" value="DIOX_N"/>
</dbReference>
<dbReference type="InterPro" id="IPR044861">
    <property type="entry name" value="IPNS-like_FE2OG_OXY"/>
</dbReference>
<dbReference type="InterPro" id="IPR027443">
    <property type="entry name" value="IPNS-like_sf"/>
</dbReference>
<dbReference type="InterPro" id="IPR050231">
    <property type="entry name" value="Iron_ascorbate_oxido_reductase"/>
</dbReference>
<dbReference type="InterPro" id="IPR005123">
    <property type="entry name" value="Oxoglu/Fe-dep_dioxygenase_dom"/>
</dbReference>
<dbReference type="PANTHER" id="PTHR47990">
    <property type="entry name" value="2-OXOGLUTARATE (2OG) AND FE(II)-DEPENDENT OXYGENASE SUPERFAMILY PROTEIN-RELATED"/>
    <property type="match status" value="1"/>
</dbReference>
<dbReference type="Pfam" id="PF03171">
    <property type="entry name" value="2OG-FeII_Oxy"/>
    <property type="match status" value="1"/>
</dbReference>
<dbReference type="Pfam" id="PF14226">
    <property type="entry name" value="DIOX_N"/>
    <property type="match status" value="1"/>
</dbReference>
<dbReference type="PRINTS" id="PR00682">
    <property type="entry name" value="IPNSYNTHASE"/>
</dbReference>
<dbReference type="SUPFAM" id="SSF51197">
    <property type="entry name" value="Clavaminate synthase-like"/>
    <property type="match status" value="1"/>
</dbReference>
<dbReference type="PROSITE" id="PS51471">
    <property type="entry name" value="FE2OG_OXY"/>
    <property type="match status" value="1"/>
</dbReference>
<accession>P0C5H5</accession>
<accession>Q6YLX3</accession>
<accession>Q7EC22</accession>
<accession>Q7GBH4</accession>
<accession>Q8RVF5</accession>
<accession>Q8S492</accession>
<evidence type="ECO:0000250" key="1">
    <source>
        <dbReference type="UniProtKB" id="O04705"/>
    </source>
</evidence>
<evidence type="ECO:0000255" key="2"/>
<evidence type="ECO:0000255" key="3">
    <source>
        <dbReference type="PROSITE-ProRule" id="PRU00805"/>
    </source>
</evidence>
<evidence type="ECO:0000256" key="4">
    <source>
        <dbReference type="SAM" id="MobiDB-lite"/>
    </source>
</evidence>
<evidence type="ECO:0000269" key="5">
    <source>
    </source>
</evidence>
<evidence type="ECO:0000269" key="6">
    <source>
    </source>
</evidence>
<evidence type="ECO:0000269" key="7">
    <source>
    </source>
</evidence>
<evidence type="ECO:0000303" key="8">
    <source>
    </source>
</evidence>
<evidence type="ECO:0000305" key="9"/>
<proteinExistence type="evidence at protein level"/>
<keyword id="KW-0408">Iron</keyword>
<keyword id="KW-0479">Metal-binding</keyword>
<keyword id="KW-0560">Oxidoreductase</keyword>
<gene>
    <name type="primary">20ox2</name>
    <name type="synonym">C20ox2</name>
    <name type="synonym">GA20</name>
    <name type="synonym">Sd-1</name>
</gene>
<organism>
    <name type="scientific">Oryza sativa subsp. indica</name>
    <name type="common">Rice</name>
    <dbReference type="NCBI Taxonomy" id="39946"/>
    <lineage>
        <taxon>Eukaryota</taxon>
        <taxon>Viridiplantae</taxon>
        <taxon>Streptophyta</taxon>
        <taxon>Embryophyta</taxon>
        <taxon>Tracheophyta</taxon>
        <taxon>Spermatophyta</taxon>
        <taxon>Magnoliopsida</taxon>
        <taxon>Liliopsida</taxon>
        <taxon>Poales</taxon>
        <taxon>Poaceae</taxon>
        <taxon>BOP clade</taxon>
        <taxon>Oryzoideae</taxon>
        <taxon>Oryzeae</taxon>
        <taxon>Oryzinae</taxon>
        <taxon>Oryza</taxon>
        <taxon>Oryza sativa</taxon>
    </lineage>
</organism>
<protein>
    <recommendedName>
        <fullName>Gibberellin 20 oxidase 2</fullName>
        <ecNumber evidence="1">1.14.11.-</ecNumber>
    </recommendedName>
    <alternativeName>
        <fullName>GA 20-oxidase 2</fullName>
    </alternativeName>
    <alternativeName>
        <fullName>Gibberellin C-20 oxidase 2</fullName>
    </alternativeName>
    <alternativeName>
        <fullName>Os20ox2</fullName>
    </alternativeName>
    <alternativeName>
        <fullName>Protein semidwarf-1</fullName>
    </alternativeName>
</protein>
<comment type="function">
    <text evidence="6">Key oxidase enzyme in the biosynthesis of gibberellin that catalyzes the conversion of GA53 to GA20 via a three-step oxidation at C-20 of the GA skeleton.</text>
</comment>
<comment type="catalytic activity">
    <reaction evidence="1">
        <text>gibberellin A12 + 2 2-oxoglutarate + 3 O2 + H(+) = gibberellin A9 + 2 succinate + 3 CO2 + 2 H2O</text>
        <dbReference type="Rhea" id="RHEA:60772"/>
        <dbReference type="ChEBI" id="CHEBI:15377"/>
        <dbReference type="ChEBI" id="CHEBI:15378"/>
        <dbReference type="ChEBI" id="CHEBI:15379"/>
        <dbReference type="ChEBI" id="CHEBI:16526"/>
        <dbReference type="ChEBI" id="CHEBI:16810"/>
        <dbReference type="ChEBI" id="CHEBI:30031"/>
        <dbReference type="ChEBI" id="CHEBI:58627"/>
        <dbReference type="ChEBI" id="CHEBI:73255"/>
    </reaction>
    <physiologicalReaction direction="left-to-right" evidence="1">
        <dbReference type="Rhea" id="RHEA:60773"/>
    </physiologicalReaction>
</comment>
<comment type="catalytic activity">
    <reaction evidence="1">
        <text>gibberellin A53 + 2 2-oxoglutarate + 3 O2 + H(+) = gibberellin A20 + 2 succinate + 3 CO2 + 2 H2O</text>
        <dbReference type="Rhea" id="RHEA:60796"/>
        <dbReference type="ChEBI" id="CHEBI:15377"/>
        <dbReference type="ChEBI" id="CHEBI:15378"/>
        <dbReference type="ChEBI" id="CHEBI:15379"/>
        <dbReference type="ChEBI" id="CHEBI:16526"/>
        <dbReference type="ChEBI" id="CHEBI:16810"/>
        <dbReference type="ChEBI" id="CHEBI:30031"/>
        <dbReference type="ChEBI" id="CHEBI:58526"/>
        <dbReference type="ChEBI" id="CHEBI:143954"/>
    </reaction>
    <physiologicalReaction direction="left-to-right" evidence="1">
        <dbReference type="Rhea" id="RHEA:60797"/>
    </physiologicalReaction>
</comment>
<comment type="cofactor">
    <cofactor>
        <name>Fe cation</name>
        <dbReference type="ChEBI" id="CHEBI:24875"/>
    </cofactor>
</comment>
<comment type="cofactor">
    <cofactor>
        <name>L-ascorbate</name>
        <dbReference type="ChEBI" id="CHEBI:38290"/>
    </cofactor>
</comment>
<comment type="polymorphism">
    <text evidence="8">Sd-1 is the major semidwarfing allele extensively used in modern rice cultivars.</text>
</comment>
<comment type="biotechnology">
    <text>This gene, also known as the 'green revolution gene' has been introduced by conventional breeding procedures into several cultivars. It provides rice cultivars with short, thick culms, raises the harvest index, improves lodging resistance and responsiveness to nitrogen fertilizer, resulting high yields without affecting panicle and grain quality.</text>
</comment>
<comment type="miscellaneous">
    <text>A second gene, 20ox1, is preferentially expressed in the reproductive organs and enables the flowers in sd1 plants to develop and be fertilized normally.</text>
</comment>
<comment type="similarity">
    <text evidence="9">Belongs to the iron/ascorbate-dependent oxidoreductase family. GA20OX subfamily.</text>
</comment>